<feature type="chain" id="PRO_0000423891" description="Rop guanine nucleotide exchange factor 5">
    <location>
        <begin position="1"/>
        <end position="611"/>
    </location>
</feature>
<feature type="domain" description="PRONE" evidence="2">
    <location>
        <begin position="93"/>
        <end position="477"/>
    </location>
</feature>
<feature type="region of interest" description="Disordered" evidence="3">
    <location>
        <begin position="1"/>
        <end position="62"/>
    </location>
</feature>
<feature type="region of interest" description="Disordered" evidence="3">
    <location>
        <begin position="513"/>
        <end position="541"/>
    </location>
</feature>
<feature type="region of interest" description="Disordered" evidence="3">
    <location>
        <begin position="588"/>
        <end position="611"/>
    </location>
</feature>
<feature type="compositionally biased region" description="Low complexity" evidence="3">
    <location>
        <begin position="34"/>
        <end position="51"/>
    </location>
</feature>
<feature type="compositionally biased region" description="Basic and acidic residues" evidence="3">
    <location>
        <begin position="525"/>
        <end position="541"/>
    </location>
</feature>
<gene>
    <name type="primary">ROPGEF5</name>
    <name type="ordered locus">At5g05940</name>
</gene>
<accession>F4K295</accession>
<accession>Q9FI92</accession>
<reference key="1">
    <citation type="journal article" date="1999" name="DNA Res.">
        <title>Structural analysis of Arabidopsis thaliana chromosome 5. IX. Sequence features of the regions of 1,011,550 bp covered by seventeen P1 and TAC clones.</title>
        <authorList>
            <person name="Kaneko T."/>
            <person name="Katoh T."/>
            <person name="Sato S."/>
            <person name="Nakamura Y."/>
            <person name="Asamizu E."/>
            <person name="Kotani H."/>
            <person name="Miyajima N."/>
            <person name="Tabata S."/>
        </authorList>
    </citation>
    <scope>NUCLEOTIDE SEQUENCE [LARGE SCALE GENOMIC DNA]</scope>
    <source>
        <strain>cv. Columbia</strain>
    </source>
</reference>
<reference key="2">
    <citation type="journal article" date="2017" name="Plant J.">
        <title>Araport11: a complete reannotation of the Arabidopsis thaliana reference genome.</title>
        <authorList>
            <person name="Cheng C.Y."/>
            <person name="Krishnakumar V."/>
            <person name="Chan A.P."/>
            <person name="Thibaud-Nissen F."/>
            <person name="Schobel S."/>
            <person name="Town C.D."/>
        </authorList>
    </citation>
    <scope>GENOME REANNOTATION</scope>
    <source>
        <strain>cv. Columbia</strain>
    </source>
</reference>
<reference key="3">
    <citation type="journal article" date="2004" name="Genome Res.">
        <title>Whole genome sequence comparisons and 'full-length' cDNA sequences: a combined approach to evaluate and improve Arabidopsis genome annotation.</title>
        <authorList>
            <person name="Castelli V."/>
            <person name="Aury J.-M."/>
            <person name="Jaillon O."/>
            <person name="Wincker P."/>
            <person name="Clepet C."/>
            <person name="Menard M."/>
            <person name="Cruaud C."/>
            <person name="Quetier F."/>
            <person name="Scarpelli C."/>
            <person name="Schaechter V."/>
            <person name="Temple G."/>
            <person name="Caboche M."/>
            <person name="Weissenbach J."/>
            <person name="Salanoubat M."/>
        </authorList>
    </citation>
    <scope>NUCLEOTIDE SEQUENCE [LARGE SCALE MRNA]</scope>
    <source>
        <strain>cv. Columbia</strain>
    </source>
</reference>
<reference key="4">
    <citation type="journal article" date="2005" name="Nature">
        <title>A new family of RhoGEFs activates the Rop molecular switch in plants.</title>
        <authorList>
            <person name="Berken A."/>
            <person name="Thomas C."/>
            <person name="Wittinghofer A."/>
        </authorList>
    </citation>
    <scope>GENE FAMILY</scope>
</reference>
<proteinExistence type="evidence at transcript level"/>
<organism>
    <name type="scientific">Arabidopsis thaliana</name>
    <name type="common">Mouse-ear cress</name>
    <dbReference type="NCBI Taxonomy" id="3702"/>
    <lineage>
        <taxon>Eukaryota</taxon>
        <taxon>Viridiplantae</taxon>
        <taxon>Streptophyta</taxon>
        <taxon>Embryophyta</taxon>
        <taxon>Tracheophyta</taxon>
        <taxon>Spermatophyta</taxon>
        <taxon>Magnoliopsida</taxon>
        <taxon>eudicotyledons</taxon>
        <taxon>Gunneridae</taxon>
        <taxon>Pentapetalae</taxon>
        <taxon>rosids</taxon>
        <taxon>malvids</taxon>
        <taxon>Brassicales</taxon>
        <taxon>Brassicaceae</taxon>
        <taxon>Camelineae</taxon>
        <taxon>Arabidopsis</taxon>
    </lineage>
</organism>
<keyword id="KW-0344">Guanine-nucleotide releasing factor</keyword>
<keyword id="KW-1185">Reference proteome</keyword>
<evidence type="ECO:0000250" key="1"/>
<evidence type="ECO:0000255" key="2">
    <source>
        <dbReference type="PROSITE-ProRule" id="PRU00663"/>
    </source>
</evidence>
<evidence type="ECO:0000256" key="3">
    <source>
        <dbReference type="SAM" id="MobiDB-lite"/>
    </source>
</evidence>
<evidence type="ECO:0000305" key="4"/>
<sequence length="611" mass="68465">MENLVKSCAGIEKKRSNLTPSMEDILTESKERSSTSGASYESSSTTTVASSSPPPPPSQILGWPIRKASFRKNSKESVNFDHKKLTLHDDSGFKAKEMNSADVEMMKERFAKLLLGEDMSGSGKGVCTALAISNAITNLCATIFGQLWRLEPLSSEKKEMWRREMEWILSVSDHIVELTPSTQTYPDGNKFEVMTCRPRFDLFINLPALRKLDNMLLDILASFKKTEFWYVDQGIVASENDGSASFRRKIQRQEEKWWLPVPRLAPNGLTEEARTELNHKRECATQILKAAMAINSLALTEMDVPKSYLETLPKNGRSCLGDVIYRYVTSDKFSAESLLDCLDLSSEHIALDIANRVEASIYVWRRRVQTKLGVNNNTSSTTPKLTWEMVKELMAAGDKRGLLVERSETLLRCLKQRFPSLTQTSLDISKIQWNKDIGKSILESYSRALESLASNIIARIDDLLYVDDLTKQSDDNNLLSSPAVSSIIAHKKVVPLPYLISASGTPYRTSFSTTPGFSPSMISPKKGERRTPYSSKDTNKIIEKGLPSRGYGVRRVLNNYLGMESKLKICVNPSDNADTAVINQISKDVEEEKKRNSTSVHQKGPPKYTVS</sequence>
<comment type="function">
    <text evidence="1">Guanine-nucleotide exchange factor (GEF) that acts as an activator of Rop (Rho of plants) GTPases by promoting the exchange of GDP for GTP.</text>
</comment>
<comment type="domain">
    <text evidence="1">The PRONE (plant-specific Rop nucleotide exchanger) domain is responsible for the GEF activity.</text>
</comment>
<comment type="sequence caution" evidence="4">
    <conflict type="erroneous gene model prediction">
        <sequence resource="EMBL-CDS" id="BAB10799"/>
    </conflict>
</comment>
<comment type="sequence caution" evidence="4">
    <conflict type="miscellaneous discrepancy">
        <sequence resource="EMBL" id="BX832060"/>
    </conflict>
    <text>Sequencing errors.</text>
</comment>
<dbReference type="EMBL" id="AB017060">
    <property type="protein sequence ID" value="BAB10799.1"/>
    <property type="status" value="ALT_SEQ"/>
    <property type="molecule type" value="Genomic_DNA"/>
</dbReference>
<dbReference type="EMBL" id="CP002688">
    <property type="protein sequence ID" value="AED90943.1"/>
    <property type="molecule type" value="Genomic_DNA"/>
</dbReference>
<dbReference type="EMBL" id="BX832060">
    <property type="status" value="NOT_ANNOTATED_CDS"/>
    <property type="molecule type" value="mRNA"/>
</dbReference>
<dbReference type="RefSeq" id="NP_196213.2">
    <property type="nucleotide sequence ID" value="NM_120676.3"/>
</dbReference>
<dbReference type="SMR" id="F4K295"/>
<dbReference type="FunCoup" id="F4K295">
    <property type="interactions" value="310"/>
</dbReference>
<dbReference type="STRING" id="3702.F4K295"/>
<dbReference type="iPTMnet" id="F4K295"/>
<dbReference type="PaxDb" id="3702-AT5G05940.1"/>
<dbReference type="ProteomicsDB" id="227985"/>
<dbReference type="EnsemblPlants" id="AT5G05940.1">
    <property type="protein sequence ID" value="AT5G05940.1"/>
    <property type="gene ID" value="AT5G05940"/>
</dbReference>
<dbReference type="GeneID" id="830479"/>
<dbReference type="Gramene" id="AT5G05940.1">
    <property type="protein sequence ID" value="AT5G05940.1"/>
    <property type="gene ID" value="AT5G05940"/>
</dbReference>
<dbReference type="KEGG" id="ath:AT5G05940"/>
<dbReference type="Araport" id="AT5G05940"/>
<dbReference type="TAIR" id="AT5G05940">
    <property type="gene designation" value="ROPGEF5"/>
</dbReference>
<dbReference type="eggNOG" id="ENOG502QPIY">
    <property type="taxonomic scope" value="Eukaryota"/>
</dbReference>
<dbReference type="HOGENOM" id="CLU_019073_2_0_1"/>
<dbReference type="InParanoid" id="F4K295"/>
<dbReference type="PRO" id="PR:F4K295"/>
<dbReference type="Proteomes" id="UP000006548">
    <property type="component" value="Chromosome 5"/>
</dbReference>
<dbReference type="ExpressionAtlas" id="F4K295">
    <property type="expression patterns" value="baseline and differential"/>
</dbReference>
<dbReference type="GO" id="GO:0005085">
    <property type="term" value="F:guanyl-nucleotide exchange factor activity"/>
    <property type="evidence" value="ECO:0000250"/>
    <property type="project" value="TAIR"/>
</dbReference>
<dbReference type="FunFam" id="1.20.58.2010:FF:000004">
    <property type="entry name" value="Rop guanine nucleotide exchange factor 1"/>
    <property type="match status" value="1"/>
</dbReference>
<dbReference type="FunFam" id="1.20.58.2010:FF:000001">
    <property type="entry name" value="Rop guanine nucleotide exchange factor 14"/>
    <property type="match status" value="1"/>
</dbReference>
<dbReference type="Gene3D" id="1.20.58.2010">
    <property type="entry name" value="PRONE domain, subdomain 1"/>
    <property type="match status" value="2"/>
</dbReference>
<dbReference type="InterPro" id="IPR005512">
    <property type="entry name" value="PRONE_dom"/>
</dbReference>
<dbReference type="InterPro" id="IPR038937">
    <property type="entry name" value="RopGEF"/>
</dbReference>
<dbReference type="PANTHER" id="PTHR33101">
    <property type="entry name" value="ROP GUANINE NUCLEOTIDE EXCHANGE FACTOR 1"/>
    <property type="match status" value="1"/>
</dbReference>
<dbReference type="PANTHER" id="PTHR33101:SF1">
    <property type="entry name" value="ROP GUANINE NUCLEOTIDE EXCHANGE FACTOR 5"/>
    <property type="match status" value="1"/>
</dbReference>
<dbReference type="Pfam" id="PF03759">
    <property type="entry name" value="PRONE"/>
    <property type="match status" value="1"/>
</dbReference>
<dbReference type="PROSITE" id="PS51334">
    <property type="entry name" value="PRONE"/>
    <property type="match status" value="1"/>
</dbReference>
<name>ROGF5_ARATH</name>
<protein>
    <recommendedName>
        <fullName>Rop guanine nucleotide exchange factor 5</fullName>
        <shortName>AtRopGEF5</shortName>
    </recommendedName>
    <alternativeName>
        <fullName>Rho of plants guanine nucleotide exchange factor 5</fullName>
    </alternativeName>
</protein>